<organism>
    <name type="scientific">Listeria monocytogenes serotype 4b (strain CLIP80459)</name>
    <dbReference type="NCBI Taxonomy" id="568819"/>
    <lineage>
        <taxon>Bacteria</taxon>
        <taxon>Bacillati</taxon>
        <taxon>Bacillota</taxon>
        <taxon>Bacilli</taxon>
        <taxon>Bacillales</taxon>
        <taxon>Listeriaceae</taxon>
        <taxon>Listeria</taxon>
    </lineage>
</organism>
<gene>
    <name type="primary">cls</name>
    <name type="ordered locus">Lm4b_02472</name>
</gene>
<evidence type="ECO:0000255" key="1">
    <source>
        <dbReference type="HAMAP-Rule" id="MF_01916"/>
    </source>
</evidence>
<reference key="1">
    <citation type="journal article" date="2012" name="BMC Genomics">
        <title>Comparative genomics and transcriptomics of lineages I, II, and III strains of Listeria monocytogenes.</title>
        <authorList>
            <person name="Hain T."/>
            <person name="Ghai R."/>
            <person name="Billion A."/>
            <person name="Kuenne C.T."/>
            <person name="Steinweg C."/>
            <person name="Izar B."/>
            <person name="Mohamed W."/>
            <person name="Mraheil M."/>
            <person name="Domann E."/>
            <person name="Schaffrath S."/>
            <person name="Karst U."/>
            <person name="Goesmann A."/>
            <person name="Oehm S."/>
            <person name="Puhler A."/>
            <person name="Merkl R."/>
            <person name="Vorwerk S."/>
            <person name="Glaser P."/>
            <person name="Garrido P."/>
            <person name="Rusniok C."/>
            <person name="Buchrieser C."/>
            <person name="Goebel W."/>
            <person name="Chakraborty T."/>
        </authorList>
    </citation>
    <scope>NUCLEOTIDE SEQUENCE [LARGE SCALE GENOMIC DNA]</scope>
    <source>
        <strain>CLIP80459</strain>
    </source>
</reference>
<comment type="function">
    <text evidence="1">Catalyzes the reversible phosphatidyl group transfer from one phosphatidylglycerol molecule to another to form cardiolipin (CL) (diphosphatidylglycerol) and glycerol.</text>
</comment>
<comment type="catalytic activity">
    <reaction evidence="1">
        <text>2 a 1,2-diacyl-sn-glycero-3-phospho-(1'-sn-glycerol) = a cardiolipin + glycerol</text>
        <dbReference type="Rhea" id="RHEA:31451"/>
        <dbReference type="ChEBI" id="CHEBI:17754"/>
        <dbReference type="ChEBI" id="CHEBI:62237"/>
        <dbReference type="ChEBI" id="CHEBI:64716"/>
    </reaction>
</comment>
<comment type="subcellular location">
    <subcellularLocation>
        <location evidence="1">Cell membrane</location>
        <topology evidence="1">Multi-pass membrane protein</topology>
    </subcellularLocation>
</comment>
<comment type="similarity">
    <text evidence="1">Belongs to the phospholipase D family. Cardiolipin synthase subfamily.</text>
</comment>
<feature type="chain" id="PRO_1000203996" description="Cardiolipin synthase">
    <location>
        <begin position="1"/>
        <end position="482"/>
    </location>
</feature>
<feature type="transmembrane region" description="Helical" evidence="1">
    <location>
        <begin position="4"/>
        <end position="24"/>
    </location>
</feature>
<feature type="transmembrane region" description="Helical" evidence="1">
    <location>
        <begin position="34"/>
        <end position="54"/>
    </location>
</feature>
<feature type="domain" description="PLD phosphodiesterase 1" evidence="1">
    <location>
        <begin position="217"/>
        <end position="244"/>
    </location>
</feature>
<feature type="domain" description="PLD phosphodiesterase 2" evidence="1">
    <location>
        <begin position="395"/>
        <end position="422"/>
    </location>
</feature>
<feature type="active site" evidence="1">
    <location>
        <position position="222"/>
    </location>
</feature>
<feature type="active site" evidence="1">
    <location>
        <position position="224"/>
    </location>
</feature>
<feature type="active site" evidence="1">
    <location>
        <position position="229"/>
    </location>
</feature>
<feature type="active site" evidence="1">
    <location>
        <position position="400"/>
    </location>
</feature>
<feature type="active site" evidence="1">
    <location>
        <position position="402"/>
    </location>
</feature>
<feature type="active site" evidence="1">
    <location>
        <position position="407"/>
    </location>
</feature>
<name>CLS_LISMC</name>
<sequence>MGLLAYLLVILLILNVFFAAVTVFLERRDTSATWAWLLVLTFVPIFGFIIYLIFGRKLSGKKIFDWKGQEKIGIQESTANQIEMIRQKEFPFSDPNVKKHRDLIYLLLVNDGAILTQDNEVELFVDGHEKFDALIADIEKAKDHIHLIYYIFHSDELGNRLMRVLERKAAEGLNVKIIYDAMGSRTTKKSFFRTFQKNGGLVRPFFPSKLPLINFRLNYRNHRKLAIIDGDVGYIGGFNIGDEYLGASKKFGYWRDTHLRVHGKAVYAMQTRFIMDWNSASSTHKIDYKARYFPTFHGKGHTSMQIVSSGPDSEWQQIKNGYIKMINAAKKTIYLQSPYFIPDASLLEAIKIAALSGVDVRVMIPNKPDHAFVYRATTNYAGELMETGAKIFIYDNGFIHAKTLVVDGEIASVGTANMDFRSFRLNFEVNAFIYEKQMVQKLEDAFLEDILKSYQLTPELYAKRSLWIKFKEAVSRLLSPIL</sequence>
<proteinExistence type="inferred from homology"/>
<keyword id="KW-1003">Cell membrane</keyword>
<keyword id="KW-0444">Lipid biosynthesis</keyword>
<keyword id="KW-0443">Lipid metabolism</keyword>
<keyword id="KW-0472">Membrane</keyword>
<keyword id="KW-0594">Phospholipid biosynthesis</keyword>
<keyword id="KW-1208">Phospholipid metabolism</keyword>
<keyword id="KW-0677">Repeat</keyword>
<keyword id="KW-0808">Transferase</keyword>
<keyword id="KW-0812">Transmembrane</keyword>
<keyword id="KW-1133">Transmembrane helix</keyword>
<protein>
    <recommendedName>
        <fullName evidence="1">Cardiolipin synthase</fullName>
        <shortName evidence="1">CL synthase</shortName>
        <ecNumber evidence="1">2.7.8.-</ecNumber>
    </recommendedName>
</protein>
<accession>C1KYS0</accession>
<dbReference type="EC" id="2.7.8.-" evidence="1"/>
<dbReference type="EMBL" id="FM242711">
    <property type="protein sequence ID" value="CAS06227.1"/>
    <property type="molecule type" value="Genomic_DNA"/>
</dbReference>
<dbReference type="RefSeq" id="WP_003722636.1">
    <property type="nucleotide sequence ID" value="NC_012488.1"/>
</dbReference>
<dbReference type="SMR" id="C1KYS0"/>
<dbReference type="KEGG" id="lmc:Lm4b_02472"/>
<dbReference type="HOGENOM" id="CLU_038053_1_1_9"/>
<dbReference type="GO" id="GO:0005886">
    <property type="term" value="C:plasma membrane"/>
    <property type="evidence" value="ECO:0007669"/>
    <property type="project" value="UniProtKB-SubCell"/>
</dbReference>
<dbReference type="GO" id="GO:0008808">
    <property type="term" value="F:cardiolipin synthase activity"/>
    <property type="evidence" value="ECO:0007669"/>
    <property type="project" value="InterPro"/>
</dbReference>
<dbReference type="GO" id="GO:0032049">
    <property type="term" value="P:cardiolipin biosynthetic process"/>
    <property type="evidence" value="ECO:0007669"/>
    <property type="project" value="InterPro"/>
</dbReference>
<dbReference type="CDD" id="cd09110">
    <property type="entry name" value="PLDc_CLS_1"/>
    <property type="match status" value="1"/>
</dbReference>
<dbReference type="CDD" id="cd09112">
    <property type="entry name" value="PLDc_CLS_2"/>
    <property type="match status" value="1"/>
</dbReference>
<dbReference type="FunFam" id="3.30.870.10:FF:000014">
    <property type="entry name" value="Cardiolipin synthase"/>
    <property type="match status" value="1"/>
</dbReference>
<dbReference type="FunFam" id="3.30.870.10:FF:000021">
    <property type="entry name" value="Cardiolipin synthase"/>
    <property type="match status" value="1"/>
</dbReference>
<dbReference type="Gene3D" id="3.30.870.10">
    <property type="entry name" value="Endonuclease Chain A"/>
    <property type="match status" value="2"/>
</dbReference>
<dbReference type="HAMAP" id="MF_01916">
    <property type="entry name" value="Cardiolipin_synth_Cls"/>
    <property type="match status" value="1"/>
</dbReference>
<dbReference type="InterPro" id="IPR030874">
    <property type="entry name" value="Cardiolipin_synth_Firmi"/>
</dbReference>
<dbReference type="InterPro" id="IPR022924">
    <property type="entry name" value="Cardiolipin_synthase"/>
</dbReference>
<dbReference type="InterPro" id="IPR027379">
    <property type="entry name" value="CLS_N"/>
</dbReference>
<dbReference type="InterPro" id="IPR025202">
    <property type="entry name" value="PLD-like_dom"/>
</dbReference>
<dbReference type="InterPro" id="IPR001736">
    <property type="entry name" value="PLipase_D/transphosphatidylase"/>
</dbReference>
<dbReference type="NCBIfam" id="TIGR04265">
    <property type="entry name" value="bac_cardiolipin"/>
    <property type="match status" value="1"/>
</dbReference>
<dbReference type="PANTHER" id="PTHR21248">
    <property type="entry name" value="CARDIOLIPIN SYNTHASE"/>
    <property type="match status" value="1"/>
</dbReference>
<dbReference type="PANTHER" id="PTHR21248:SF22">
    <property type="entry name" value="PHOSPHOLIPASE D"/>
    <property type="match status" value="1"/>
</dbReference>
<dbReference type="Pfam" id="PF13091">
    <property type="entry name" value="PLDc_2"/>
    <property type="match status" value="2"/>
</dbReference>
<dbReference type="Pfam" id="PF13396">
    <property type="entry name" value="PLDc_N"/>
    <property type="match status" value="1"/>
</dbReference>
<dbReference type="SMART" id="SM00155">
    <property type="entry name" value="PLDc"/>
    <property type="match status" value="2"/>
</dbReference>
<dbReference type="SUPFAM" id="SSF56024">
    <property type="entry name" value="Phospholipase D/nuclease"/>
    <property type="match status" value="2"/>
</dbReference>
<dbReference type="PROSITE" id="PS50035">
    <property type="entry name" value="PLD"/>
    <property type="match status" value="2"/>
</dbReference>